<feature type="chain" id="PRO_1000198075" description="Thiamine-phosphate synthase">
    <location>
        <begin position="1"/>
        <end position="205"/>
    </location>
</feature>
<feature type="binding site" evidence="1">
    <location>
        <begin position="37"/>
        <end position="41"/>
    </location>
    <ligand>
        <name>4-amino-2-methyl-5-(diphosphooxymethyl)pyrimidine</name>
        <dbReference type="ChEBI" id="CHEBI:57841"/>
    </ligand>
</feature>
<feature type="binding site" evidence="1">
    <location>
        <position position="69"/>
    </location>
    <ligand>
        <name>4-amino-2-methyl-5-(diphosphooxymethyl)pyrimidine</name>
        <dbReference type="ChEBI" id="CHEBI:57841"/>
    </ligand>
</feature>
<feature type="binding site" evidence="1">
    <location>
        <position position="70"/>
    </location>
    <ligand>
        <name>Mg(2+)</name>
        <dbReference type="ChEBI" id="CHEBI:18420"/>
    </ligand>
</feature>
<feature type="binding site" evidence="1">
    <location>
        <position position="89"/>
    </location>
    <ligand>
        <name>Mg(2+)</name>
        <dbReference type="ChEBI" id="CHEBI:18420"/>
    </ligand>
</feature>
<feature type="binding site" evidence="1">
    <location>
        <position position="108"/>
    </location>
    <ligand>
        <name>4-amino-2-methyl-5-(diphosphooxymethyl)pyrimidine</name>
        <dbReference type="ChEBI" id="CHEBI:57841"/>
    </ligand>
</feature>
<feature type="binding site" evidence="1">
    <location>
        <begin position="134"/>
        <end position="136"/>
    </location>
    <ligand>
        <name>2-[(2R,5Z)-2-carboxy-4-methylthiazol-5(2H)-ylidene]ethyl phosphate</name>
        <dbReference type="ChEBI" id="CHEBI:62899"/>
    </ligand>
</feature>
<feature type="binding site" evidence="1">
    <location>
        <position position="137"/>
    </location>
    <ligand>
        <name>4-amino-2-methyl-5-(diphosphooxymethyl)pyrimidine</name>
        <dbReference type="ChEBI" id="CHEBI:57841"/>
    </ligand>
</feature>
<feature type="binding site" evidence="1">
    <location>
        <position position="165"/>
    </location>
    <ligand>
        <name>2-[(2R,5Z)-2-carboxy-4-methylthiazol-5(2H)-ylidene]ethyl phosphate</name>
        <dbReference type="ChEBI" id="CHEBI:62899"/>
    </ligand>
</feature>
<feature type="binding site" evidence="1">
    <location>
        <begin position="185"/>
        <end position="186"/>
    </location>
    <ligand>
        <name>2-[(2R,5Z)-2-carboxy-4-methylthiazol-5(2H)-ylidene]ethyl phosphate</name>
        <dbReference type="ChEBI" id="CHEBI:62899"/>
    </ligand>
</feature>
<name>THIE_CLOBJ</name>
<evidence type="ECO:0000255" key="1">
    <source>
        <dbReference type="HAMAP-Rule" id="MF_00097"/>
    </source>
</evidence>
<protein>
    <recommendedName>
        <fullName evidence="1">Thiamine-phosphate synthase</fullName>
        <shortName evidence="1">TP synthase</shortName>
        <shortName evidence="1">TPS</shortName>
        <ecNumber evidence="1">2.5.1.3</ecNumber>
    </recommendedName>
    <alternativeName>
        <fullName evidence="1">Thiamine-phosphate pyrophosphorylase</fullName>
        <shortName evidence="1">TMP pyrophosphorylase</shortName>
        <shortName evidence="1">TMP-PPase</shortName>
    </alternativeName>
</protein>
<proteinExistence type="inferred from homology"/>
<comment type="function">
    <text evidence="1">Condenses 4-methyl-5-(beta-hydroxyethyl)thiazole monophosphate (THZ-P) and 2-methyl-4-amino-5-hydroxymethyl pyrimidine pyrophosphate (HMP-PP) to form thiamine monophosphate (TMP).</text>
</comment>
<comment type="catalytic activity">
    <reaction evidence="1">
        <text>2-[(2R,5Z)-2-carboxy-4-methylthiazol-5(2H)-ylidene]ethyl phosphate + 4-amino-2-methyl-5-(diphosphooxymethyl)pyrimidine + 2 H(+) = thiamine phosphate + CO2 + diphosphate</text>
        <dbReference type="Rhea" id="RHEA:47844"/>
        <dbReference type="ChEBI" id="CHEBI:15378"/>
        <dbReference type="ChEBI" id="CHEBI:16526"/>
        <dbReference type="ChEBI" id="CHEBI:33019"/>
        <dbReference type="ChEBI" id="CHEBI:37575"/>
        <dbReference type="ChEBI" id="CHEBI:57841"/>
        <dbReference type="ChEBI" id="CHEBI:62899"/>
        <dbReference type="EC" id="2.5.1.3"/>
    </reaction>
</comment>
<comment type="catalytic activity">
    <reaction evidence="1">
        <text>2-(2-carboxy-4-methylthiazol-5-yl)ethyl phosphate + 4-amino-2-methyl-5-(diphosphooxymethyl)pyrimidine + 2 H(+) = thiamine phosphate + CO2 + diphosphate</text>
        <dbReference type="Rhea" id="RHEA:47848"/>
        <dbReference type="ChEBI" id="CHEBI:15378"/>
        <dbReference type="ChEBI" id="CHEBI:16526"/>
        <dbReference type="ChEBI" id="CHEBI:33019"/>
        <dbReference type="ChEBI" id="CHEBI:37575"/>
        <dbReference type="ChEBI" id="CHEBI:57841"/>
        <dbReference type="ChEBI" id="CHEBI:62890"/>
        <dbReference type="EC" id="2.5.1.3"/>
    </reaction>
</comment>
<comment type="catalytic activity">
    <reaction evidence="1">
        <text>4-methyl-5-(2-phosphooxyethyl)-thiazole + 4-amino-2-methyl-5-(diphosphooxymethyl)pyrimidine + H(+) = thiamine phosphate + diphosphate</text>
        <dbReference type="Rhea" id="RHEA:22328"/>
        <dbReference type="ChEBI" id="CHEBI:15378"/>
        <dbReference type="ChEBI" id="CHEBI:33019"/>
        <dbReference type="ChEBI" id="CHEBI:37575"/>
        <dbReference type="ChEBI" id="CHEBI:57841"/>
        <dbReference type="ChEBI" id="CHEBI:58296"/>
        <dbReference type="EC" id="2.5.1.3"/>
    </reaction>
</comment>
<comment type="cofactor">
    <cofactor evidence="1">
        <name>Mg(2+)</name>
        <dbReference type="ChEBI" id="CHEBI:18420"/>
    </cofactor>
    <text evidence="1">Binds 1 Mg(2+) ion per subunit.</text>
</comment>
<comment type="pathway">
    <text evidence="1">Cofactor biosynthesis; thiamine diphosphate biosynthesis; thiamine phosphate from 4-amino-2-methyl-5-diphosphomethylpyrimidine and 4-methyl-5-(2-phosphoethyl)-thiazole: step 1/1.</text>
</comment>
<comment type="similarity">
    <text evidence="1">Belongs to the thiamine-phosphate synthase family.</text>
</comment>
<dbReference type="EC" id="2.5.1.3" evidence="1"/>
<dbReference type="EMBL" id="CP001581">
    <property type="protein sequence ID" value="ACO85552.1"/>
    <property type="molecule type" value="Genomic_DNA"/>
</dbReference>
<dbReference type="RefSeq" id="WP_003355846.1">
    <property type="nucleotide sequence ID" value="NC_012563.1"/>
</dbReference>
<dbReference type="SMR" id="C1FSC1"/>
<dbReference type="KEGG" id="cby:CLM_0531"/>
<dbReference type="eggNOG" id="COG0352">
    <property type="taxonomic scope" value="Bacteria"/>
</dbReference>
<dbReference type="HOGENOM" id="CLU_018272_3_2_9"/>
<dbReference type="UniPathway" id="UPA00060">
    <property type="reaction ID" value="UER00141"/>
</dbReference>
<dbReference type="Proteomes" id="UP000001374">
    <property type="component" value="Chromosome"/>
</dbReference>
<dbReference type="GO" id="GO:0005737">
    <property type="term" value="C:cytoplasm"/>
    <property type="evidence" value="ECO:0007669"/>
    <property type="project" value="TreeGrafter"/>
</dbReference>
<dbReference type="GO" id="GO:0000287">
    <property type="term" value="F:magnesium ion binding"/>
    <property type="evidence" value="ECO:0007669"/>
    <property type="project" value="UniProtKB-UniRule"/>
</dbReference>
<dbReference type="GO" id="GO:0004789">
    <property type="term" value="F:thiamine-phosphate diphosphorylase activity"/>
    <property type="evidence" value="ECO:0007669"/>
    <property type="project" value="UniProtKB-UniRule"/>
</dbReference>
<dbReference type="GO" id="GO:0009228">
    <property type="term" value="P:thiamine biosynthetic process"/>
    <property type="evidence" value="ECO:0007669"/>
    <property type="project" value="UniProtKB-KW"/>
</dbReference>
<dbReference type="GO" id="GO:0009229">
    <property type="term" value="P:thiamine diphosphate biosynthetic process"/>
    <property type="evidence" value="ECO:0007669"/>
    <property type="project" value="UniProtKB-UniRule"/>
</dbReference>
<dbReference type="CDD" id="cd00564">
    <property type="entry name" value="TMP_TenI"/>
    <property type="match status" value="1"/>
</dbReference>
<dbReference type="FunFam" id="3.20.20.70:FF:000282">
    <property type="entry name" value="Thiamine-phosphate synthase"/>
    <property type="match status" value="1"/>
</dbReference>
<dbReference type="Gene3D" id="3.20.20.70">
    <property type="entry name" value="Aldolase class I"/>
    <property type="match status" value="1"/>
</dbReference>
<dbReference type="HAMAP" id="MF_00097">
    <property type="entry name" value="TMP_synthase"/>
    <property type="match status" value="1"/>
</dbReference>
<dbReference type="InterPro" id="IPR013785">
    <property type="entry name" value="Aldolase_TIM"/>
</dbReference>
<dbReference type="InterPro" id="IPR036206">
    <property type="entry name" value="ThiamineP_synth_sf"/>
</dbReference>
<dbReference type="InterPro" id="IPR022998">
    <property type="entry name" value="ThiamineP_synth_TenI"/>
</dbReference>
<dbReference type="InterPro" id="IPR034291">
    <property type="entry name" value="TMP_synthase"/>
</dbReference>
<dbReference type="NCBIfam" id="TIGR00693">
    <property type="entry name" value="thiE"/>
    <property type="match status" value="1"/>
</dbReference>
<dbReference type="PANTHER" id="PTHR20857:SF23">
    <property type="entry name" value="THIAMINE BIOSYNTHETIC BIFUNCTIONAL ENZYME"/>
    <property type="match status" value="1"/>
</dbReference>
<dbReference type="PANTHER" id="PTHR20857">
    <property type="entry name" value="THIAMINE-PHOSPHATE PYROPHOSPHORYLASE"/>
    <property type="match status" value="1"/>
</dbReference>
<dbReference type="Pfam" id="PF02581">
    <property type="entry name" value="TMP-TENI"/>
    <property type="match status" value="1"/>
</dbReference>
<dbReference type="SUPFAM" id="SSF51391">
    <property type="entry name" value="Thiamin phosphate synthase"/>
    <property type="match status" value="1"/>
</dbReference>
<organism>
    <name type="scientific">Clostridium botulinum (strain Kyoto / Type A2)</name>
    <dbReference type="NCBI Taxonomy" id="536232"/>
    <lineage>
        <taxon>Bacteria</taxon>
        <taxon>Bacillati</taxon>
        <taxon>Bacillota</taxon>
        <taxon>Clostridia</taxon>
        <taxon>Eubacteriales</taxon>
        <taxon>Clostridiaceae</taxon>
        <taxon>Clostridium</taxon>
    </lineage>
</organism>
<keyword id="KW-0460">Magnesium</keyword>
<keyword id="KW-0479">Metal-binding</keyword>
<keyword id="KW-0784">Thiamine biosynthesis</keyword>
<keyword id="KW-0808">Transferase</keyword>
<gene>
    <name evidence="1" type="primary">thiE</name>
    <name type="ordered locus">CLM_0531</name>
</gene>
<reference key="1">
    <citation type="submission" date="2008-10" db="EMBL/GenBank/DDBJ databases">
        <title>Genome sequence of Clostridium botulinum A2 Kyoto.</title>
        <authorList>
            <person name="Shrivastava S."/>
            <person name="Brinkac L.M."/>
            <person name="Brown J.L."/>
            <person name="Bruce D."/>
            <person name="Detter C.C."/>
            <person name="Johnson E.A."/>
            <person name="Munk C.A."/>
            <person name="Smith L.A."/>
            <person name="Smith T.J."/>
            <person name="Sutton G."/>
            <person name="Brettin T.S."/>
        </authorList>
    </citation>
    <scope>NUCLEOTIDE SEQUENCE [LARGE SCALE GENOMIC DNA]</scope>
    <source>
        <strain>Kyoto / Type A2</strain>
    </source>
</reference>
<accession>C1FSC1</accession>
<sequence length="205" mass="22421">MEINYELYLITDRRFLKGRQLKKIVEDAILGGVTIVQVREKDVSTREFYNVAKEVKEVTDYYKVPIIINDRLDIAQAIDASGVHLGQKDMHLNIAREILGKDKIIGISVGNVKEALEAQNNGADYLGIGTIFPTGSKKDVDAIIGIDGLSKIKDSISIPSVAIGGINKTNFKDVLKTGIEGISVISAILDEDDIKLAANNLLINK</sequence>